<evidence type="ECO:0000250" key="1">
    <source>
        <dbReference type="UniProtKB" id="G4NAP4"/>
    </source>
</evidence>
<evidence type="ECO:0000250" key="2">
    <source>
        <dbReference type="UniProtKB" id="Q8X151"/>
    </source>
</evidence>
<evidence type="ECO:0000255" key="3"/>
<evidence type="ECO:0000255" key="4">
    <source>
        <dbReference type="PROSITE-ProRule" id="PRU00498"/>
    </source>
</evidence>
<evidence type="ECO:0000255" key="5">
    <source>
        <dbReference type="PROSITE-ProRule" id="PRU00726"/>
    </source>
</evidence>
<evidence type="ECO:0000256" key="6">
    <source>
        <dbReference type="SAM" id="MobiDB-lite"/>
    </source>
</evidence>
<evidence type="ECO:0000269" key="7">
    <source>
    </source>
</evidence>
<evidence type="ECO:0000303" key="8">
    <source>
    </source>
</evidence>
<evidence type="ECO:0000305" key="9"/>
<proteinExistence type="evidence at protein level"/>
<accession>P0CT92</accession>
<keyword id="KW-0223">Dioxygenase</keyword>
<keyword id="KW-0325">Glycoprotein</keyword>
<keyword id="KW-0464">Manganese</keyword>
<keyword id="KW-0479">Metal-binding</keyword>
<keyword id="KW-0560">Oxidoreductase</keyword>
<keyword id="KW-0964">Secreted</keyword>
<keyword id="KW-0732">Signal</keyword>
<feature type="signal peptide" evidence="3">
    <location>
        <begin position="1"/>
        <end position="17"/>
    </location>
</feature>
<feature type="chain" id="PRO_0000436134" description="Manganese lipoxygenase" evidence="3">
    <location>
        <begin position="18"/>
        <end position="617"/>
    </location>
</feature>
<feature type="domain" description="Lipoxygenase" evidence="5">
    <location>
        <begin position="122"/>
        <end position="617"/>
    </location>
</feature>
<feature type="region of interest" description="Disordered" evidence="6">
    <location>
        <begin position="23"/>
        <end position="59"/>
    </location>
</feature>
<feature type="compositionally biased region" description="Low complexity" evidence="6">
    <location>
        <begin position="23"/>
        <end position="48"/>
    </location>
</feature>
<feature type="binding site" evidence="1">
    <location>
        <position position="293"/>
    </location>
    <ligand>
        <name>Mn(2+)</name>
        <dbReference type="ChEBI" id="CHEBI:29035"/>
        <note>catalytic</note>
    </ligand>
</feature>
<feature type="binding site" evidence="1">
    <location>
        <position position="297"/>
    </location>
    <ligand>
        <name>Mn(2+)</name>
        <dbReference type="ChEBI" id="CHEBI:29035"/>
        <note>catalytic</note>
    </ligand>
</feature>
<feature type="binding site" evidence="1">
    <location>
        <position position="479"/>
    </location>
    <ligand>
        <name>Mn(2+)</name>
        <dbReference type="ChEBI" id="CHEBI:29035"/>
        <note>catalytic</note>
    </ligand>
</feature>
<feature type="binding site" evidence="1">
    <location>
        <position position="483"/>
    </location>
    <ligand>
        <name>Mn(2+)</name>
        <dbReference type="ChEBI" id="CHEBI:29035"/>
        <note>catalytic</note>
    </ligand>
</feature>
<feature type="binding site" evidence="1">
    <location>
        <position position="617"/>
    </location>
    <ligand>
        <name>Mn(2+)</name>
        <dbReference type="ChEBI" id="CHEBI:29035"/>
        <note>catalytic</note>
    </ligand>
</feature>
<feature type="glycosylation site" description="N-linked (GlcNAc...) asparagine" evidence="4">
    <location>
        <position position="109"/>
    </location>
</feature>
<feature type="glycosylation site" description="N-linked (GlcNAc...) asparagine" evidence="4">
    <location>
        <position position="119"/>
    </location>
</feature>
<feature type="glycosylation site" description="N-linked (GlcNAc...) asparagine" evidence="4">
    <location>
        <position position="160"/>
    </location>
</feature>
<feature type="glycosylation site" description="N-linked (GlcNAc...) asparagine" evidence="4">
    <location>
        <position position="547"/>
    </location>
</feature>
<feature type="mutagenesis site" description="Changes the stereospecificity of the enzyme to almost 100% 9S-HPOTrE as final product from the oxygenation of alpha-linolenic acid." evidence="7">
    <original>L</original>
    <variation>F</variation>
    <location>
        <position position="350"/>
    </location>
</feature>
<feature type="mutagenesis site" description="Changes the stereospecificity of the enzyme from 100% 9S-HPODE to 62% 13R- and 38% 9S-HPODE from the oxygenation of linoleic acid." evidence="7">
    <original>L</original>
    <variation>M</variation>
    <location>
        <position position="350"/>
    </location>
</feature>
<dbReference type="EC" id="1.13.11.-" evidence="7"/>
<dbReference type="EC" id="1.13.11.45" evidence="7"/>
<dbReference type="EC" id="1.13.11.58" evidence="7"/>
<dbReference type="EMBL" id="AX590415">
    <property type="protein sequence ID" value="CAD61974.1"/>
    <property type="molecule type" value="Genomic_DNA"/>
</dbReference>
<dbReference type="SMR" id="P0CT92"/>
<dbReference type="SwissLipids" id="SLP:000001655"/>
<dbReference type="GO" id="GO:0005576">
    <property type="term" value="C:extracellular region"/>
    <property type="evidence" value="ECO:0007669"/>
    <property type="project" value="UniProtKB-SubCell"/>
</dbReference>
<dbReference type="GO" id="GO:0050584">
    <property type="term" value="F:linoleate 11-lipoxygenase activity"/>
    <property type="evidence" value="ECO:0000314"/>
    <property type="project" value="UniProtKB"/>
</dbReference>
<dbReference type="GO" id="GO:1990136">
    <property type="term" value="F:linoleate 9S-lipoxygenase activity"/>
    <property type="evidence" value="ECO:0000314"/>
    <property type="project" value="UniProtKB"/>
</dbReference>
<dbReference type="GO" id="GO:0046872">
    <property type="term" value="F:metal ion binding"/>
    <property type="evidence" value="ECO:0007669"/>
    <property type="project" value="UniProtKB-KW"/>
</dbReference>
<dbReference type="GO" id="GO:0043651">
    <property type="term" value="P:linoleic acid metabolic process"/>
    <property type="evidence" value="ECO:0000305"/>
    <property type="project" value="UniProtKB"/>
</dbReference>
<dbReference type="GO" id="GO:0034440">
    <property type="term" value="P:lipid oxidation"/>
    <property type="evidence" value="ECO:0007669"/>
    <property type="project" value="InterPro"/>
</dbReference>
<dbReference type="Gene3D" id="3.10.450.60">
    <property type="match status" value="1"/>
</dbReference>
<dbReference type="Gene3D" id="1.20.245.10">
    <property type="entry name" value="Lipoxygenase-1, Domain 5"/>
    <property type="match status" value="1"/>
</dbReference>
<dbReference type="InterPro" id="IPR000907">
    <property type="entry name" value="LipOase"/>
</dbReference>
<dbReference type="InterPro" id="IPR013819">
    <property type="entry name" value="LipOase_C"/>
</dbReference>
<dbReference type="InterPro" id="IPR036226">
    <property type="entry name" value="LipOase_C_sf"/>
</dbReference>
<dbReference type="PANTHER" id="PTHR11771">
    <property type="entry name" value="LIPOXYGENASE"/>
    <property type="match status" value="1"/>
</dbReference>
<dbReference type="Pfam" id="PF00305">
    <property type="entry name" value="Lipoxygenase"/>
    <property type="match status" value="1"/>
</dbReference>
<dbReference type="SUPFAM" id="SSF48484">
    <property type="entry name" value="Lipoxigenase"/>
    <property type="match status" value="1"/>
</dbReference>
<dbReference type="PROSITE" id="PS51393">
    <property type="entry name" value="LIPOXYGENASE_3"/>
    <property type="match status" value="1"/>
</dbReference>
<sequence length="617" mass="67532">MRIGLLAFAVAARYVEALPVASGEEVASSSAPTTLPSTSSSSALPSPTKYTLPHEDPNPEARKAEIALKRGGFLYGPSTLGQTTFYPSGTLGTAMSQRDQALWLRDAENQTITAYREANETLRDIQSHGGLKTLDDFALLYDGHWKASVPEGIEKGMLSNYTSDLLFSMERLSNNPYSLKRLHPTKDKLPFSVEDKVVKQLTATTLAALHKAGRLFFVDHSDQKKYTPQAGRYAAACQGLFYVDARSNQFLPLAIKTNVGADLTYTPLDDKNDWLLAKIMFNNNDLFYSQMYHVLFHTVPEIVHMAAIRTLSESHPVLAVLNRIMYQAYAIRPVGERILFNPGGFWDQNLGLPATAAVDFLSSIYAHGEGGFRAGYVENNLRKRGLVGDTFGGPALPHFPFYEDAQRVLGAIRGFMQAFVDSTYGGDDGALARDFELQDWVAEANGPAQVRDFPTAPLRRREELVGILTHIAWNTGGAHHVLNQGAPVRASGVLPLHPAALYAPVPAAKGAVASSDGLLAWLPDEVKSVEQVSLLARFNRAQVRDRNQTVRNMFAAPELLAGNGEAYAAANARFVEETGRISREIEGRGFDSKGLSQGMPFIWTALNPAVNPFFLSI</sequence>
<organism>
    <name type="scientific">Nakataea oryzae</name>
    <name type="common">Rice stem rot fungus</name>
    <name type="synonym">Magnaporthe salvinii</name>
    <dbReference type="NCBI Taxonomy" id="165778"/>
    <lineage>
        <taxon>Eukaryota</taxon>
        <taxon>Fungi</taxon>
        <taxon>Dikarya</taxon>
        <taxon>Ascomycota</taxon>
        <taxon>Pezizomycotina</taxon>
        <taxon>Sordariomycetes</taxon>
        <taxon>Sordariomycetidae</taxon>
        <taxon>Magnaporthales</taxon>
        <taxon>Magnaporthaceae</taxon>
        <taxon>Nakataea</taxon>
    </lineage>
</organism>
<reference key="1">
    <citation type="patent" date="2002-10-31" number="WO02086114">
        <title>Variants of lipoxygenase and their use.</title>
        <authorList>
            <person name="Sugio A."/>
            <person name="Takagi S."/>
        </authorList>
    </citation>
    <scope>NUCLEOTIDE SEQUENCE [GENOMIC DNA]</scope>
    <source>
        <strain>NBRC 6642</strain>
    </source>
</reference>
<reference key="2">
    <citation type="journal article" date="2013" name="J. Lipid Res.">
        <title>Secretion of two novel enzymes, manganese 9S-lipoxygenase and epoxy alcohol synthase, by the rice pathogen Magnaporthe salvinii.</title>
        <authorList>
            <person name="Wennman A."/>
            <person name="Oliw E.H."/>
        </authorList>
    </citation>
    <scope>FUNCTION</scope>
    <scope>CATALYTIC ACTIVITY</scope>
    <scope>COFACTOR</scope>
    <scope>SUBCELLULAR LOCATION</scope>
    <scope>MUTAGENESIS OF LEU-350</scope>
    <source>
        <strain>CBS 253.34</strain>
        <strain>CBS 288.52</strain>
    </source>
</reference>
<name>MNLOX_NAKOS</name>
<protein>
    <recommendedName>
        <fullName>Manganese lipoxygenase</fullName>
        <shortName>MnLOX</shortName>
        <ecNumber evidence="7">1.13.11.-</ecNumber>
        <ecNumber evidence="7">1.13.11.45</ecNumber>
        <ecNumber evidence="7">1.13.11.58</ecNumber>
    </recommendedName>
    <alternativeName>
        <fullName evidence="8">Linoleate 9S-lipoxygenase</fullName>
        <shortName evidence="8">Linoleate 9S-LOX</shortName>
    </alternativeName>
    <alternativeName>
        <fullName evidence="8">Manganese 9S-lipoxygenase</fullName>
        <shortName>9S-MnLOX</shortName>
    </alternativeName>
</protein>
<comment type="function">
    <text evidence="7">Lipoxygenase that metabolizes linoleic and alpha-linolenic acids to 9S-, 11- and 13R-hydroperoxy fatty acids. At the end of lipoxygenation, the intermediate products 11S-HPODE and 13R-HPODE from linoleic acid are then transformed into 9S-HPODE as the final product. The intermediate product 11R-HPOTrE from alpha-linolenic acid is transformed into 9S-HPOTrE and 13R-HPOTrE as the final products. 9S-HPOTrE is further oxidized by the enzyme to 9,16-DiHOTrE as the end product. Also acts on gamma-linolenic acid producing 9-HOTrE(n-6) as the main metabolite.</text>
</comment>
<comment type="catalytic activity">
    <reaction evidence="7">
        <text>(9Z,12Z)-octadecadienoate + O2 = (9S)-hydroperoxy-(10E,12Z)-octadecadienoate</text>
        <dbReference type="Rhea" id="RHEA:30291"/>
        <dbReference type="ChEBI" id="CHEBI:15379"/>
        <dbReference type="ChEBI" id="CHEBI:30245"/>
        <dbReference type="ChEBI" id="CHEBI:60955"/>
        <dbReference type="EC" id="1.13.11.58"/>
    </reaction>
</comment>
<comment type="catalytic activity">
    <reaction evidence="7">
        <text>(9Z,12Z)-octadecadienoate + O2 = (11S)-hydroperoxy-(9Z,12Z)-octadecadienoate</text>
        <dbReference type="Rhea" id="RHEA:18993"/>
        <dbReference type="ChEBI" id="CHEBI:15379"/>
        <dbReference type="ChEBI" id="CHEBI:30245"/>
        <dbReference type="ChEBI" id="CHEBI:57467"/>
        <dbReference type="EC" id="1.13.11.45"/>
    </reaction>
</comment>
<comment type="catalytic activity">
    <reaction evidence="7">
        <text>(9Z,12Z)-octadecadienoate + O2 = (13R)-hydroperoxy-(9Z,11E)-octadecadienoate</text>
        <dbReference type="Rhea" id="RHEA:51240"/>
        <dbReference type="ChEBI" id="CHEBI:15379"/>
        <dbReference type="ChEBI" id="CHEBI:30245"/>
        <dbReference type="ChEBI" id="CHEBI:133985"/>
    </reaction>
</comment>
<comment type="catalytic activity">
    <reaction evidence="7">
        <text>(9Z,12Z,15Z)-octadecatrienoate + O2 = (9S)-hydroperoxy-(10E,12Z,15Z)-octadecatrienoate</text>
        <dbReference type="Rhea" id="RHEA:51248"/>
        <dbReference type="ChEBI" id="CHEBI:15379"/>
        <dbReference type="ChEBI" id="CHEBI:32387"/>
        <dbReference type="ChEBI" id="CHEBI:60962"/>
    </reaction>
</comment>
<comment type="catalytic activity">
    <reaction evidence="7">
        <text>(9Z,12Z,15Z)-octadecatrienoate + O2 = (11R)-hydroperoxy-(9Z,12Z,15Z)-octadecatrienoate</text>
        <dbReference type="Rhea" id="RHEA:51252"/>
        <dbReference type="ChEBI" id="CHEBI:15379"/>
        <dbReference type="ChEBI" id="CHEBI:32387"/>
        <dbReference type="ChEBI" id="CHEBI:133989"/>
    </reaction>
</comment>
<comment type="catalytic activity">
    <reaction evidence="7">
        <text>(9Z,12Z,15Z)-octadecatrienoate + O2 = (13R)-hydroperoxy-(9Z,11E,15Z)-octadecatrienoate</text>
        <dbReference type="Rhea" id="RHEA:51244"/>
        <dbReference type="ChEBI" id="CHEBI:15379"/>
        <dbReference type="ChEBI" id="CHEBI:32387"/>
        <dbReference type="ChEBI" id="CHEBI:133987"/>
    </reaction>
</comment>
<comment type="cofactor">
    <cofactor evidence="7">
        <name>Mn(2+)</name>
        <dbReference type="ChEBI" id="CHEBI:29035"/>
    </cofactor>
    <text evidence="2">Three His residues, the carboxyl oxygen of the C-terminal Ile or Val residue, and a fifth residue, usually Asn, ligate the metal, which binds water to form a catalytic base Mn(2+)OH(2) for hydrogen abstraction.</text>
</comment>
<comment type="subcellular location">
    <subcellularLocation>
        <location evidence="7">Secreted</location>
    </subcellularLocation>
</comment>
<comment type="similarity">
    <text evidence="9">Belongs to the lipoxygenase family. Manganese lipoxygenase subfamily.</text>
</comment>